<protein>
    <recommendedName>
        <fullName evidence="1">Aspartate--tRNA(Asp/Asn) ligase</fullName>
        <ecNumber evidence="1">6.1.1.23</ecNumber>
    </recommendedName>
    <alternativeName>
        <fullName evidence="1">Aspartyl-tRNA synthetase</fullName>
        <shortName evidence="1">AspRS</shortName>
    </alternativeName>
    <alternativeName>
        <fullName evidence="1">Non-discriminating aspartyl-tRNA synthetase</fullName>
        <shortName evidence="1">ND-AspRS</shortName>
    </alternativeName>
</protein>
<proteinExistence type="inferred from homology"/>
<sequence>MRTHYCGDLRTTHLGETVTLYGWVDRRRDHGGVIFLDLRDRQGIVQIASSPDQTPASYPVAEGLRNEYVVQVTGVVSKRPPESLNEKIPTGEIEIYADSIILLNGVNQQLPFVVSSHEAEQVREDVRLKYRYLDLRRARLSQNLQLRHQVVKAMRRFLEDQENFLEIETPILTRSTPEGARDYLVPSRVNPGEWYALPQSPQLFKQLLMVAGMDRYYQIARCFRDEDLRADRQPEFTQLDMEMSFMGQEEILDLNEALICHIFKVVKNIDLPRPFPRLTYQESMAKYGNDRPDTRFGLELVDVSDLLGNTGFKVFSAAVSSGGSIKAIRVPGGNETISNVRIKPGGDLFKEATEAGAKGIAYIRVRDNGEIDTIGAIKENLDEAQVKTLLQLTQAEAGDLLLFGAGDTATVDKSLSRLRLVLGEQLGLIDPDAINLLWITDFPMFEWNSDEKRFEALHHPFTAPHPDDLGDLKTARAQAYDLVMNGVEIGGGSLRIYQREVQEKVFATIGLSPEEAHEKFGFLLDAFEYGTPPHGGIAYGLDRLVMLLAKEDSIRDVIAFPKTQQASCLLTEAPAAVDKKQLKELSVASTYVPKVKVDD</sequence>
<dbReference type="EC" id="6.1.1.23" evidence="1"/>
<dbReference type="EMBL" id="BA000022">
    <property type="protein sequence ID" value="BAA17910.1"/>
    <property type="molecule type" value="Genomic_DNA"/>
</dbReference>
<dbReference type="PIR" id="S75048">
    <property type="entry name" value="S75048"/>
</dbReference>
<dbReference type="SMR" id="P73851"/>
<dbReference type="FunCoup" id="P73851">
    <property type="interactions" value="486"/>
</dbReference>
<dbReference type="IntAct" id="P73851">
    <property type="interactions" value="2"/>
</dbReference>
<dbReference type="STRING" id="1148.gene:10498779"/>
<dbReference type="PaxDb" id="1148-1652993"/>
<dbReference type="EnsemblBacteria" id="BAA17910">
    <property type="protein sequence ID" value="BAA17910"/>
    <property type="gene ID" value="BAA17910"/>
</dbReference>
<dbReference type="KEGG" id="syn:slr1720"/>
<dbReference type="eggNOG" id="COG0173">
    <property type="taxonomic scope" value="Bacteria"/>
</dbReference>
<dbReference type="InParanoid" id="P73851"/>
<dbReference type="PhylomeDB" id="P73851"/>
<dbReference type="Proteomes" id="UP000001425">
    <property type="component" value="Chromosome"/>
</dbReference>
<dbReference type="GO" id="GO:0005737">
    <property type="term" value="C:cytoplasm"/>
    <property type="evidence" value="ECO:0007669"/>
    <property type="project" value="UniProtKB-SubCell"/>
</dbReference>
<dbReference type="GO" id="GO:0004815">
    <property type="term" value="F:aspartate-tRNA ligase activity"/>
    <property type="evidence" value="ECO:0000318"/>
    <property type="project" value="GO_Central"/>
</dbReference>
<dbReference type="GO" id="GO:0050560">
    <property type="term" value="F:aspartate-tRNA(Asn) ligase activity"/>
    <property type="evidence" value="ECO:0007669"/>
    <property type="project" value="UniProtKB-EC"/>
</dbReference>
<dbReference type="GO" id="GO:0005524">
    <property type="term" value="F:ATP binding"/>
    <property type="evidence" value="ECO:0007669"/>
    <property type="project" value="UniProtKB-UniRule"/>
</dbReference>
<dbReference type="GO" id="GO:0003676">
    <property type="term" value="F:nucleic acid binding"/>
    <property type="evidence" value="ECO:0007669"/>
    <property type="project" value="InterPro"/>
</dbReference>
<dbReference type="GO" id="GO:0006422">
    <property type="term" value="P:aspartyl-tRNA aminoacylation"/>
    <property type="evidence" value="ECO:0000318"/>
    <property type="project" value="GO_Central"/>
</dbReference>
<dbReference type="CDD" id="cd00777">
    <property type="entry name" value="AspRS_core"/>
    <property type="match status" value="1"/>
</dbReference>
<dbReference type="CDD" id="cd04317">
    <property type="entry name" value="EcAspRS_like_N"/>
    <property type="match status" value="1"/>
</dbReference>
<dbReference type="Gene3D" id="3.30.930.10">
    <property type="entry name" value="Bira Bifunctional Protein, Domain 2"/>
    <property type="match status" value="1"/>
</dbReference>
<dbReference type="Gene3D" id="3.30.1360.30">
    <property type="entry name" value="GAD-like domain"/>
    <property type="match status" value="1"/>
</dbReference>
<dbReference type="Gene3D" id="2.40.50.140">
    <property type="entry name" value="Nucleic acid-binding proteins"/>
    <property type="match status" value="1"/>
</dbReference>
<dbReference type="HAMAP" id="MF_00044">
    <property type="entry name" value="Asp_tRNA_synth_type1"/>
    <property type="match status" value="1"/>
</dbReference>
<dbReference type="InterPro" id="IPR004364">
    <property type="entry name" value="Aa-tRNA-synt_II"/>
</dbReference>
<dbReference type="InterPro" id="IPR006195">
    <property type="entry name" value="aa-tRNA-synth_II"/>
</dbReference>
<dbReference type="InterPro" id="IPR045864">
    <property type="entry name" value="aa-tRNA-synth_II/BPL/LPL"/>
</dbReference>
<dbReference type="InterPro" id="IPR004524">
    <property type="entry name" value="Asp-tRNA-ligase_1"/>
</dbReference>
<dbReference type="InterPro" id="IPR047089">
    <property type="entry name" value="Asp-tRNA-ligase_1_N"/>
</dbReference>
<dbReference type="InterPro" id="IPR002312">
    <property type="entry name" value="Asp/Asn-tRNA-synth_IIb"/>
</dbReference>
<dbReference type="InterPro" id="IPR047090">
    <property type="entry name" value="AspRS_core"/>
</dbReference>
<dbReference type="InterPro" id="IPR004115">
    <property type="entry name" value="GAD-like_sf"/>
</dbReference>
<dbReference type="InterPro" id="IPR029351">
    <property type="entry name" value="GAD_dom"/>
</dbReference>
<dbReference type="InterPro" id="IPR012340">
    <property type="entry name" value="NA-bd_OB-fold"/>
</dbReference>
<dbReference type="InterPro" id="IPR004365">
    <property type="entry name" value="NA-bd_OB_tRNA"/>
</dbReference>
<dbReference type="NCBIfam" id="TIGR00459">
    <property type="entry name" value="aspS_bact"/>
    <property type="match status" value="1"/>
</dbReference>
<dbReference type="NCBIfam" id="NF001750">
    <property type="entry name" value="PRK00476.1"/>
    <property type="match status" value="1"/>
</dbReference>
<dbReference type="PANTHER" id="PTHR22594:SF5">
    <property type="entry name" value="ASPARTATE--TRNA LIGASE, MITOCHONDRIAL"/>
    <property type="match status" value="1"/>
</dbReference>
<dbReference type="PANTHER" id="PTHR22594">
    <property type="entry name" value="ASPARTYL/LYSYL-TRNA SYNTHETASE"/>
    <property type="match status" value="1"/>
</dbReference>
<dbReference type="Pfam" id="PF02938">
    <property type="entry name" value="GAD"/>
    <property type="match status" value="1"/>
</dbReference>
<dbReference type="Pfam" id="PF00152">
    <property type="entry name" value="tRNA-synt_2"/>
    <property type="match status" value="1"/>
</dbReference>
<dbReference type="Pfam" id="PF01336">
    <property type="entry name" value="tRNA_anti-codon"/>
    <property type="match status" value="1"/>
</dbReference>
<dbReference type="PRINTS" id="PR01042">
    <property type="entry name" value="TRNASYNTHASP"/>
</dbReference>
<dbReference type="SUPFAM" id="SSF55681">
    <property type="entry name" value="Class II aaRS and biotin synthetases"/>
    <property type="match status" value="1"/>
</dbReference>
<dbReference type="SUPFAM" id="SSF55261">
    <property type="entry name" value="GAD domain-like"/>
    <property type="match status" value="1"/>
</dbReference>
<dbReference type="SUPFAM" id="SSF50249">
    <property type="entry name" value="Nucleic acid-binding proteins"/>
    <property type="match status" value="1"/>
</dbReference>
<dbReference type="PROSITE" id="PS50862">
    <property type="entry name" value="AA_TRNA_LIGASE_II"/>
    <property type="match status" value="1"/>
</dbReference>
<organism>
    <name type="scientific">Synechocystis sp. (strain ATCC 27184 / PCC 6803 / Kazusa)</name>
    <dbReference type="NCBI Taxonomy" id="1111708"/>
    <lineage>
        <taxon>Bacteria</taxon>
        <taxon>Bacillati</taxon>
        <taxon>Cyanobacteriota</taxon>
        <taxon>Cyanophyceae</taxon>
        <taxon>Synechococcales</taxon>
        <taxon>Merismopediaceae</taxon>
        <taxon>Synechocystis</taxon>
    </lineage>
</organism>
<name>SYDND_SYNY3</name>
<evidence type="ECO:0000255" key="1">
    <source>
        <dbReference type="HAMAP-Rule" id="MF_00044"/>
    </source>
</evidence>
<keyword id="KW-0030">Aminoacyl-tRNA synthetase</keyword>
<keyword id="KW-0067">ATP-binding</keyword>
<keyword id="KW-0963">Cytoplasm</keyword>
<keyword id="KW-0436">Ligase</keyword>
<keyword id="KW-0547">Nucleotide-binding</keyword>
<keyword id="KW-0648">Protein biosynthesis</keyword>
<keyword id="KW-1185">Reference proteome</keyword>
<gene>
    <name evidence="1" type="primary">aspS</name>
    <name type="ordered locus">slr1720</name>
</gene>
<comment type="function">
    <text evidence="1">Aspartyl-tRNA synthetase with relaxed tRNA specificity since it is able to aspartylate not only its cognate tRNA(Asp) but also tRNA(Asn). Reaction proceeds in two steps: L-aspartate is first activated by ATP to form Asp-AMP and then transferred to the acceptor end of tRNA(Asp/Asn).</text>
</comment>
<comment type="catalytic activity">
    <reaction evidence="1">
        <text>tRNA(Asx) + L-aspartate + ATP = L-aspartyl-tRNA(Asx) + AMP + diphosphate</text>
        <dbReference type="Rhea" id="RHEA:18349"/>
        <dbReference type="Rhea" id="RHEA-COMP:9710"/>
        <dbReference type="Rhea" id="RHEA-COMP:9711"/>
        <dbReference type="ChEBI" id="CHEBI:29991"/>
        <dbReference type="ChEBI" id="CHEBI:30616"/>
        <dbReference type="ChEBI" id="CHEBI:33019"/>
        <dbReference type="ChEBI" id="CHEBI:78442"/>
        <dbReference type="ChEBI" id="CHEBI:78516"/>
        <dbReference type="ChEBI" id="CHEBI:456215"/>
        <dbReference type="EC" id="6.1.1.23"/>
    </reaction>
</comment>
<comment type="subunit">
    <text evidence="1">Homodimer.</text>
</comment>
<comment type="subcellular location">
    <subcellularLocation>
        <location evidence="1">Cytoplasm</location>
    </subcellularLocation>
</comment>
<comment type="similarity">
    <text evidence="1">Belongs to the class-II aminoacyl-tRNA synthetase family. Type 1 subfamily.</text>
</comment>
<reference key="1">
    <citation type="journal article" date="1996" name="DNA Res.">
        <title>Sequence analysis of the genome of the unicellular cyanobacterium Synechocystis sp. strain PCC6803. II. Sequence determination of the entire genome and assignment of potential protein-coding regions.</title>
        <authorList>
            <person name="Kaneko T."/>
            <person name="Sato S."/>
            <person name="Kotani H."/>
            <person name="Tanaka A."/>
            <person name="Asamizu E."/>
            <person name="Nakamura Y."/>
            <person name="Miyajima N."/>
            <person name="Hirosawa M."/>
            <person name="Sugiura M."/>
            <person name="Sasamoto S."/>
            <person name="Kimura T."/>
            <person name="Hosouchi T."/>
            <person name="Matsuno A."/>
            <person name="Muraki A."/>
            <person name="Nakazaki N."/>
            <person name="Naruo K."/>
            <person name="Okumura S."/>
            <person name="Shimpo S."/>
            <person name="Takeuchi C."/>
            <person name="Wada T."/>
            <person name="Watanabe A."/>
            <person name="Yamada M."/>
            <person name="Yasuda M."/>
            <person name="Tabata S."/>
        </authorList>
    </citation>
    <scope>NUCLEOTIDE SEQUENCE [LARGE SCALE GENOMIC DNA]</scope>
    <source>
        <strain>ATCC 27184 / PCC 6803 / Kazusa</strain>
    </source>
</reference>
<accession>P73851</accession>
<feature type="chain" id="PRO_0000110967" description="Aspartate--tRNA(Asp/Asn) ligase">
    <location>
        <begin position="1"/>
        <end position="599"/>
    </location>
</feature>
<feature type="region of interest" description="Aspartate" evidence="1">
    <location>
        <begin position="202"/>
        <end position="205"/>
    </location>
</feature>
<feature type="binding site" evidence="1">
    <location>
        <position position="178"/>
    </location>
    <ligand>
        <name>L-aspartate</name>
        <dbReference type="ChEBI" id="CHEBI:29991"/>
    </ligand>
</feature>
<feature type="binding site" evidence="1">
    <location>
        <begin position="224"/>
        <end position="226"/>
    </location>
    <ligand>
        <name>ATP</name>
        <dbReference type="ChEBI" id="CHEBI:30616"/>
    </ligand>
</feature>
<feature type="binding site" evidence="1">
    <location>
        <position position="224"/>
    </location>
    <ligand>
        <name>L-aspartate</name>
        <dbReference type="ChEBI" id="CHEBI:29991"/>
    </ligand>
</feature>
<feature type="binding site" evidence="1">
    <location>
        <position position="233"/>
    </location>
    <ligand>
        <name>ATP</name>
        <dbReference type="ChEBI" id="CHEBI:30616"/>
    </ligand>
</feature>
<feature type="binding site" evidence="1">
    <location>
        <position position="458"/>
    </location>
    <ligand>
        <name>L-aspartate</name>
        <dbReference type="ChEBI" id="CHEBI:29991"/>
    </ligand>
</feature>
<feature type="binding site" evidence="1">
    <location>
        <position position="488"/>
    </location>
    <ligand>
        <name>ATP</name>
        <dbReference type="ChEBI" id="CHEBI:30616"/>
    </ligand>
</feature>
<feature type="binding site" evidence="1">
    <location>
        <position position="495"/>
    </location>
    <ligand>
        <name>L-aspartate</name>
        <dbReference type="ChEBI" id="CHEBI:29991"/>
    </ligand>
</feature>
<feature type="binding site" evidence="1">
    <location>
        <begin position="540"/>
        <end position="543"/>
    </location>
    <ligand>
        <name>ATP</name>
        <dbReference type="ChEBI" id="CHEBI:30616"/>
    </ligand>
</feature>
<feature type="site" description="Important for tRNA non-discrimination" evidence="1">
    <location>
        <position position="30"/>
    </location>
</feature>